<reference key="1">
    <citation type="journal article" date="2007" name="PLoS Biol.">
        <title>Evolution of symbiotic bacteria in the distal human intestine.</title>
        <authorList>
            <person name="Xu J."/>
            <person name="Mahowald M.A."/>
            <person name="Ley R.E."/>
            <person name="Lozupone C.A."/>
            <person name="Hamady M."/>
            <person name="Martens E.C."/>
            <person name="Henrissat B."/>
            <person name="Coutinho P.M."/>
            <person name="Minx P."/>
            <person name="Latreille P."/>
            <person name="Cordum H."/>
            <person name="Van Brunt A."/>
            <person name="Kim K."/>
            <person name="Fulton R.S."/>
            <person name="Fulton L.A."/>
            <person name="Clifton S.W."/>
            <person name="Wilson R.K."/>
            <person name="Knight R.D."/>
            <person name="Gordon J.I."/>
        </authorList>
    </citation>
    <scope>NUCLEOTIDE SEQUENCE [LARGE SCALE GENOMIC DNA]</scope>
    <source>
        <strain>ATCC 8482 / DSM 1447 / JCM 5826 / CCUG 4940 / NBRC 14291 / NCTC 11154</strain>
    </source>
</reference>
<gene>
    <name evidence="1" type="primary">metG</name>
    <name type="ordered locus">BVU_0882</name>
</gene>
<evidence type="ECO:0000255" key="1">
    <source>
        <dbReference type="HAMAP-Rule" id="MF_00098"/>
    </source>
</evidence>
<accession>A6KYR3</accession>
<proteinExistence type="inferred from homology"/>
<protein>
    <recommendedName>
        <fullName evidence="1">Methionine--tRNA ligase</fullName>
        <ecNumber evidence="1">6.1.1.10</ecNumber>
    </recommendedName>
    <alternativeName>
        <fullName evidence="1">Methionyl-tRNA synthetase</fullName>
        <shortName evidence="1">MetRS</shortName>
    </alternativeName>
</protein>
<sequence>MENKFKRTTVTSALPYANGPVHIGHLAGVYVPADIYVRYLRLKKEDVLFIGGSDEHGVPITIRAKKEGITPQDVVDRYHTLIKESFKEFGISFDIYSRTTSKTHHELASEFFKTLYDKGEFIEKTSMQYYDEEAHQFLADRYITGECPHCHAEGAYGDQCEKCGTSLSPTDLINPKSAISGSKPVMRETKHWYLPLDKHEGWLREWILENHKEWRPNVYGQCKSWLDMGLQPRAVSRDLDWGIPVPVEGAEGKVLYVWFDAPIGYISNTKELLPDSWETWWKDPETRLIHFIGKDNIVFHCIVFPAMLKAEGSYILPDNVPSNEFLNLEGDKISTSRNWAVWLHEYLQDFPGKQDVLRYVLTANAPETKDNDFTWKDFQARNNNELVAVYGNFVNRALVLTHKYFDGKVPVCGELTDYDKETLKEFADVKAEVEKLLDVFKFRDAQKEAMNLARIGNKYLADTEPWKLAKTDMDRVATILNIALQLVANLAIAFEPFLPFSSEKLRKMLNMETFEWDQLGRTDLLAEGHQLNKAELLFEKIEDETIQAQVDKLLATKKANEAANYKANPIKPVIAFEEFEKLDIRVGTVLECEVVPKMKKLLKFKIADGLENRTIVSGIAQHYKPEELVGKQVLFIANLAPRQFKNGLVSEGMILSAENFDGTLAVTSLLREVKPGSEVK</sequence>
<organism>
    <name type="scientific">Phocaeicola vulgatus (strain ATCC 8482 / DSM 1447 / JCM 5826 / CCUG 4940 / NBRC 14291 / NCTC 11154)</name>
    <name type="common">Bacteroides vulgatus</name>
    <dbReference type="NCBI Taxonomy" id="435590"/>
    <lineage>
        <taxon>Bacteria</taxon>
        <taxon>Pseudomonadati</taxon>
        <taxon>Bacteroidota</taxon>
        <taxon>Bacteroidia</taxon>
        <taxon>Bacteroidales</taxon>
        <taxon>Bacteroidaceae</taxon>
        <taxon>Phocaeicola</taxon>
    </lineage>
</organism>
<comment type="function">
    <text evidence="1">Is required not only for elongation of protein synthesis but also for the initiation of all mRNA translation through initiator tRNA(fMet) aminoacylation.</text>
</comment>
<comment type="catalytic activity">
    <reaction evidence="1">
        <text>tRNA(Met) + L-methionine + ATP = L-methionyl-tRNA(Met) + AMP + diphosphate</text>
        <dbReference type="Rhea" id="RHEA:13481"/>
        <dbReference type="Rhea" id="RHEA-COMP:9667"/>
        <dbReference type="Rhea" id="RHEA-COMP:9698"/>
        <dbReference type="ChEBI" id="CHEBI:30616"/>
        <dbReference type="ChEBI" id="CHEBI:33019"/>
        <dbReference type="ChEBI" id="CHEBI:57844"/>
        <dbReference type="ChEBI" id="CHEBI:78442"/>
        <dbReference type="ChEBI" id="CHEBI:78530"/>
        <dbReference type="ChEBI" id="CHEBI:456215"/>
        <dbReference type="EC" id="6.1.1.10"/>
    </reaction>
</comment>
<comment type="cofactor">
    <cofactor evidence="1">
        <name>Zn(2+)</name>
        <dbReference type="ChEBI" id="CHEBI:29105"/>
    </cofactor>
    <text evidence="1">Binds 1 zinc ion per subunit.</text>
</comment>
<comment type="subunit">
    <text evidence="1">Homodimer.</text>
</comment>
<comment type="subcellular location">
    <subcellularLocation>
        <location evidence="1">Cytoplasm</location>
    </subcellularLocation>
</comment>
<comment type="similarity">
    <text evidence="1">Belongs to the class-I aminoacyl-tRNA synthetase family. MetG type 1 subfamily.</text>
</comment>
<keyword id="KW-0030">Aminoacyl-tRNA synthetase</keyword>
<keyword id="KW-0067">ATP-binding</keyword>
<keyword id="KW-0963">Cytoplasm</keyword>
<keyword id="KW-0436">Ligase</keyword>
<keyword id="KW-0479">Metal-binding</keyword>
<keyword id="KW-0547">Nucleotide-binding</keyword>
<keyword id="KW-0648">Protein biosynthesis</keyword>
<keyword id="KW-0694">RNA-binding</keyword>
<keyword id="KW-0820">tRNA-binding</keyword>
<keyword id="KW-0862">Zinc</keyword>
<name>SYM_PHOV8</name>
<feature type="chain" id="PRO_0000331782" description="Methionine--tRNA ligase">
    <location>
        <begin position="1"/>
        <end position="680"/>
    </location>
</feature>
<feature type="domain" description="tRNA-binding" evidence="1">
    <location>
        <begin position="578"/>
        <end position="680"/>
    </location>
</feature>
<feature type="short sequence motif" description="'HIGH' region">
    <location>
        <begin position="15"/>
        <end position="25"/>
    </location>
</feature>
<feature type="short sequence motif" description="'KMSKS' region">
    <location>
        <begin position="332"/>
        <end position="336"/>
    </location>
</feature>
<feature type="binding site" evidence="1">
    <location>
        <position position="147"/>
    </location>
    <ligand>
        <name>Zn(2+)</name>
        <dbReference type="ChEBI" id="CHEBI:29105"/>
    </ligand>
</feature>
<feature type="binding site" evidence="1">
    <location>
        <position position="150"/>
    </location>
    <ligand>
        <name>Zn(2+)</name>
        <dbReference type="ChEBI" id="CHEBI:29105"/>
    </ligand>
</feature>
<feature type="binding site" evidence="1">
    <location>
        <position position="160"/>
    </location>
    <ligand>
        <name>Zn(2+)</name>
        <dbReference type="ChEBI" id="CHEBI:29105"/>
    </ligand>
</feature>
<feature type="binding site" evidence="1">
    <location>
        <position position="163"/>
    </location>
    <ligand>
        <name>Zn(2+)</name>
        <dbReference type="ChEBI" id="CHEBI:29105"/>
    </ligand>
</feature>
<feature type="binding site" evidence="1">
    <location>
        <position position="335"/>
    </location>
    <ligand>
        <name>ATP</name>
        <dbReference type="ChEBI" id="CHEBI:30616"/>
    </ligand>
</feature>
<dbReference type="EC" id="6.1.1.10" evidence="1"/>
<dbReference type="EMBL" id="CP000139">
    <property type="protein sequence ID" value="ABR38577.1"/>
    <property type="molecule type" value="Genomic_DNA"/>
</dbReference>
<dbReference type="RefSeq" id="WP_005850560.1">
    <property type="nucleotide sequence ID" value="NZ_CAXUIZ010000002.1"/>
</dbReference>
<dbReference type="SMR" id="A6KYR3"/>
<dbReference type="STRING" id="435590.BVU_0882"/>
<dbReference type="PaxDb" id="435590-BVU_0882"/>
<dbReference type="GeneID" id="5301849"/>
<dbReference type="KEGG" id="bvu:BVU_0882"/>
<dbReference type="eggNOG" id="COG0073">
    <property type="taxonomic scope" value="Bacteria"/>
</dbReference>
<dbReference type="eggNOG" id="COG0143">
    <property type="taxonomic scope" value="Bacteria"/>
</dbReference>
<dbReference type="HOGENOM" id="CLU_009710_1_2_10"/>
<dbReference type="BioCyc" id="BVUL435590:G1G59-925-MONOMER"/>
<dbReference type="Proteomes" id="UP000002861">
    <property type="component" value="Chromosome"/>
</dbReference>
<dbReference type="GO" id="GO:0005829">
    <property type="term" value="C:cytosol"/>
    <property type="evidence" value="ECO:0007669"/>
    <property type="project" value="TreeGrafter"/>
</dbReference>
<dbReference type="GO" id="GO:0005524">
    <property type="term" value="F:ATP binding"/>
    <property type="evidence" value="ECO:0007669"/>
    <property type="project" value="UniProtKB-UniRule"/>
</dbReference>
<dbReference type="GO" id="GO:0046872">
    <property type="term" value="F:metal ion binding"/>
    <property type="evidence" value="ECO:0007669"/>
    <property type="project" value="UniProtKB-KW"/>
</dbReference>
<dbReference type="GO" id="GO:0004825">
    <property type="term" value="F:methionine-tRNA ligase activity"/>
    <property type="evidence" value="ECO:0007669"/>
    <property type="project" value="UniProtKB-UniRule"/>
</dbReference>
<dbReference type="GO" id="GO:0000049">
    <property type="term" value="F:tRNA binding"/>
    <property type="evidence" value="ECO:0007669"/>
    <property type="project" value="UniProtKB-KW"/>
</dbReference>
<dbReference type="GO" id="GO:0006431">
    <property type="term" value="P:methionyl-tRNA aminoacylation"/>
    <property type="evidence" value="ECO:0007669"/>
    <property type="project" value="UniProtKB-UniRule"/>
</dbReference>
<dbReference type="CDD" id="cd07957">
    <property type="entry name" value="Anticodon_Ia_Met"/>
    <property type="match status" value="1"/>
</dbReference>
<dbReference type="CDD" id="cd00814">
    <property type="entry name" value="MetRS_core"/>
    <property type="match status" value="1"/>
</dbReference>
<dbReference type="CDD" id="cd02800">
    <property type="entry name" value="tRNA_bind_EcMetRS_like"/>
    <property type="match status" value="1"/>
</dbReference>
<dbReference type="FunFam" id="1.10.730.10:FF:000030">
    <property type="entry name" value="Methionine--tRNA ligase"/>
    <property type="match status" value="1"/>
</dbReference>
<dbReference type="FunFam" id="2.20.28.20:FF:000001">
    <property type="entry name" value="Methionine--tRNA ligase"/>
    <property type="match status" value="1"/>
</dbReference>
<dbReference type="FunFam" id="2.40.50.140:FF:000042">
    <property type="entry name" value="Methionine--tRNA ligase"/>
    <property type="match status" value="1"/>
</dbReference>
<dbReference type="Gene3D" id="3.40.50.620">
    <property type="entry name" value="HUPs"/>
    <property type="match status" value="1"/>
</dbReference>
<dbReference type="Gene3D" id="1.10.730.10">
    <property type="entry name" value="Isoleucyl-tRNA Synthetase, Domain 1"/>
    <property type="match status" value="1"/>
</dbReference>
<dbReference type="Gene3D" id="2.20.28.20">
    <property type="entry name" value="Methionyl-tRNA synthetase, Zn-domain"/>
    <property type="match status" value="1"/>
</dbReference>
<dbReference type="Gene3D" id="2.40.50.140">
    <property type="entry name" value="Nucleic acid-binding proteins"/>
    <property type="match status" value="1"/>
</dbReference>
<dbReference type="HAMAP" id="MF_00098">
    <property type="entry name" value="Met_tRNA_synth_type1"/>
    <property type="match status" value="1"/>
</dbReference>
<dbReference type="InterPro" id="IPR001412">
    <property type="entry name" value="aa-tRNA-synth_I_CS"/>
</dbReference>
<dbReference type="InterPro" id="IPR041872">
    <property type="entry name" value="Anticodon_Met"/>
</dbReference>
<dbReference type="InterPro" id="IPR004495">
    <property type="entry name" value="Met-tRNA-synth_bsu_C"/>
</dbReference>
<dbReference type="InterPro" id="IPR023458">
    <property type="entry name" value="Met-tRNA_ligase_1"/>
</dbReference>
<dbReference type="InterPro" id="IPR014758">
    <property type="entry name" value="Met-tRNA_synth"/>
</dbReference>
<dbReference type="InterPro" id="IPR015413">
    <property type="entry name" value="Methionyl/Leucyl_tRNA_Synth"/>
</dbReference>
<dbReference type="InterPro" id="IPR033911">
    <property type="entry name" value="MetRS_core"/>
</dbReference>
<dbReference type="InterPro" id="IPR029038">
    <property type="entry name" value="MetRS_Zn"/>
</dbReference>
<dbReference type="InterPro" id="IPR012340">
    <property type="entry name" value="NA-bd_OB-fold"/>
</dbReference>
<dbReference type="InterPro" id="IPR014729">
    <property type="entry name" value="Rossmann-like_a/b/a_fold"/>
</dbReference>
<dbReference type="InterPro" id="IPR002547">
    <property type="entry name" value="tRNA-bd_dom"/>
</dbReference>
<dbReference type="InterPro" id="IPR009080">
    <property type="entry name" value="tRNAsynth_Ia_anticodon-bd"/>
</dbReference>
<dbReference type="NCBIfam" id="TIGR00398">
    <property type="entry name" value="metG"/>
    <property type="match status" value="1"/>
</dbReference>
<dbReference type="NCBIfam" id="TIGR00399">
    <property type="entry name" value="metG_C_term"/>
    <property type="match status" value="1"/>
</dbReference>
<dbReference type="NCBIfam" id="NF001100">
    <property type="entry name" value="PRK00133.1"/>
    <property type="match status" value="1"/>
</dbReference>
<dbReference type="PANTHER" id="PTHR45765">
    <property type="entry name" value="METHIONINE--TRNA LIGASE"/>
    <property type="match status" value="1"/>
</dbReference>
<dbReference type="PANTHER" id="PTHR45765:SF1">
    <property type="entry name" value="METHIONINE--TRNA LIGASE, CYTOPLASMIC"/>
    <property type="match status" value="1"/>
</dbReference>
<dbReference type="Pfam" id="PF19303">
    <property type="entry name" value="Anticodon_3"/>
    <property type="match status" value="1"/>
</dbReference>
<dbReference type="Pfam" id="PF09334">
    <property type="entry name" value="tRNA-synt_1g"/>
    <property type="match status" value="1"/>
</dbReference>
<dbReference type="Pfam" id="PF01588">
    <property type="entry name" value="tRNA_bind"/>
    <property type="match status" value="1"/>
</dbReference>
<dbReference type="PRINTS" id="PR01041">
    <property type="entry name" value="TRNASYNTHMET"/>
</dbReference>
<dbReference type="SUPFAM" id="SSF47323">
    <property type="entry name" value="Anticodon-binding domain of a subclass of class I aminoacyl-tRNA synthetases"/>
    <property type="match status" value="1"/>
</dbReference>
<dbReference type="SUPFAM" id="SSF57770">
    <property type="entry name" value="Methionyl-tRNA synthetase (MetRS), Zn-domain"/>
    <property type="match status" value="1"/>
</dbReference>
<dbReference type="SUPFAM" id="SSF50249">
    <property type="entry name" value="Nucleic acid-binding proteins"/>
    <property type="match status" value="1"/>
</dbReference>
<dbReference type="SUPFAM" id="SSF52374">
    <property type="entry name" value="Nucleotidylyl transferase"/>
    <property type="match status" value="1"/>
</dbReference>
<dbReference type="PROSITE" id="PS00178">
    <property type="entry name" value="AA_TRNA_LIGASE_I"/>
    <property type="match status" value="1"/>
</dbReference>
<dbReference type="PROSITE" id="PS50886">
    <property type="entry name" value="TRBD"/>
    <property type="match status" value="1"/>
</dbReference>